<feature type="chain" id="PRO_0000222087" description="Uncharacterized protein 8">
    <location>
        <begin position="1"/>
        <end position="84"/>
    </location>
</feature>
<feature type="region of interest" description="Disordered" evidence="1">
    <location>
        <begin position="62"/>
        <end position="84"/>
    </location>
</feature>
<sequence>MDVGNQILEPKNLKRNSGKLRNILKRISGNGIIKERKRRLGKNAPLENSKLVQQVKRNVNVGYATKKDTMRMSAQKRTTKRLKP</sequence>
<evidence type="ECO:0000256" key="1">
    <source>
        <dbReference type="SAM" id="MobiDB-lite"/>
    </source>
</evidence>
<dbReference type="EMBL" id="X15828">
    <property type="protein sequence ID" value="CAA33829.1"/>
    <property type="molecule type" value="Genomic_DNA"/>
</dbReference>
<dbReference type="PIR" id="JS0378">
    <property type="entry name" value="JS0378"/>
</dbReference>
<dbReference type="SMR" id="P15635"/>
<dbReference type="KEGG" id="vg:912262"/>
<dbReference type="Proteomes" id="UP000001065">
    <property type="component" value="Genome"/>
</dbReference>
<reference key="1">
    <citation type="journal article" date="1989" name="Nucleic Acids Res.">
        <title>The complete sequence of soybean chlorotic mottle virus DNA and the identification of a novel promoter.</title>
        <authorList>
            <person name="Hasegawa A."/>
            <person name="Verver J."/>
            <person name="Shimada A."/>
            <person name="Saito M."/>
            <person name="Goldbach R."/>
            <person name="van Kammen A."/>
            <person name="Miki K."/>
            <person name="Kameya-Iwaki M."/>
            <person name="Hibi T."/>
        </authorList>
    </citation>
    <scope>NUCLEOTIDE SEQUENCE [GENOMIC DNA]</scope>
</reference>
<accession>P15635</accession>
<name>Y8_SOCMV</name>
<proteinExistence type="predicted"/>
<organism>
    <name type="scientific">Soybean chlorotic mottle virus</name>
    <dbReference type="NCBI Taxonomy" id="10651"/>
    <lineage>
        <taxon>Viruses</taxon>
        <taxon>Riboviria</taxon>
        <taxon>Pararnavirae</taxon>
        <taxon>Artverviricota</taxon>
        <taxon>Revtraviricetes</taxon>
        <taxon>Ortervirales</taxon>
        <taxon>Caulimoviridae</taxon>
        <taxon>Soymovirus</taxon>
        <taxon>Soymovirus maculaglycinis</taxon>
    </lineage>
</organism>
<keyword id="KW-1185">Reference proteome</keyword>
<gene>
    <name type="ORF">ORF VIII</name>
</gene>
<protein>
    <recommendedName>
        <fullName>Uncharacterized protein 8</fullName>
    </recommendedName>
</protein>
<organismHost>
    <name type="scientific">Glycine max</name>
    <name type="common">Soybean</name>
    <name type="synonym">Glycine hispida</name>
    <dbReference type="NCBI Taxonomy" id="3847"/>
</organismHost>
<organismHost>
    <name type="scientific">Lablab purpureus</name>
    <name type="common">Hyacinth bean</name>
    <name type="synonym">Dolichos lablab</name>
    <dbReference type="NCBI Taxonomy" id="35936"/>
</organismHost>
<organismHost>
    <name type="scientific">Phaseolus vulgaris</name>
    <name type="common">Kidney bean</name>
    <name type="synonym">French bean</name>
    <dbReference type="NCBI Taxonomy" id="3885"/>
</organismHost>
<organismHost>
    <name type="scientific">Vigna unguiculata</name>
    <name type="common">Cowpea</name>
    <dbReference type="NCBI Taxonomy" id="3917"/>
</organismHost>